<accession>Q5ZV93</accession>
<evidence type="ECO:0000255" key="1">
    <source>
        <dbReference type="HAMAP-Rule" id="MF_01849"/>
    </source>
</evidence>
<evidence type="ECO:0000255" key="2">
    <source>
        <dbReference type="PROSITE-ProRule" id="PRU01266"/>
    </source>
</evidence>
<evidence type="ECO:0000305" key="3"/>
<sequence>MDQQKVNLLNYNYSQLRELLIAWDEKPFRAQQLFQWIHQVGIRDFAQMTNLGKVLRNKLSQLACIDLPEIVACQKSADGTHKWLLKLECGNCIETVFIPEANRGTLCVSSQVGCALNCSFCSTAKQGFNRNLSTAEIIGQVWLAARELSDNNGTHDKKITNVVMMGMGEPLLNFDNVVSAMNIMMDDLAYGLSKRRVTLSTSGVLPEMERLREVSPVALAVSLHAPTDELRNELVPINKKYPLSQLISLCKRYFKDEPRRKVTFEYVMLKGVNDQPEHASQLIKLLHNVPAKVNLIPFNPFPLTQYQRSSRETIDAFRDKLMKHGINTITRKTRGDDIDAACGQLAGEVKDKTSRSQRWQKLHFMSKTDKSTELTISSEEIA</sequence>
<feature type="chain" id="PRO_0000350229" description="Dual-specificity RNA methyltransferase RlmN">
    <location>
        <begin position="1"/>
        <end position="382"/>
    </location>
</feature>
<feature type="domain" description="Radical SAM core" evidence="2">
    <location>
        <begin position="100"/>
        <end position="336"/>
    </location>
</feature>
<feature type="active site" description="Proton acceptor" evidence="1">
    <location>
        <position position="94"/>
    </location>
</feature>
<feature type="active site" description="S-methylcysteine intermediate" evidence="1">
    <location>
        <position position="342"/>
    </location>
</feature>
<feature type="binding site" evidence="1">
    <location>
        <position position="114"/>
    </location>
    <ligand>
        <name>[4Fe-4S] cluster</name>
        <dbReference type="ChEBI" id="CHEBI:49883"/>
        <note>4Fe-4S-S-AdoMet</note>
    </ligand>
</feature>
<feature type="binding site" evidence="1">
    <location>
        <position position="118"/>
    </location>
    <ligand>
        <name>[4Fe-4S] cluster</name>
        <dbReference type="ChEBI" id="CHEBI:49883"/>
        <note>4Fe-4S-S-AdoMet</note>
    </ligand>
</feature>
<feature type="binding site" evidence="1">
    <location>
        <position position="121"/>
    </location>
    <ligand>
        <name>[4Fe-4S] cluster</name>
        <dbReference type="ChEBI" id="CHEBI:49883"/>
        <note>4Fe-4S-S-AdoMet</note>
    </ligand>
</feature>
<feature type="binding site" evidence="1">
    <location>
        <begin position="168"/>
        <end position="169"/>
    </location>
    <ligand>
        <name>S-adenosyl-L-methionine</name>
        <dbReference type="ChEBI" id="CHEBI:59789"/>
    </ligand>
</feature>
<feature type="binding site" evidence="1">
    <location>
        <position position="200"/>
    </location>
    <ligand>
        <name>S-adenosyl-L-methionine</name>
        <dbReference type="ChEBI" id="CHEBI:59789"/>
    </ligand>
</feature>
<feature type="binding site" evidence="1">
    <location>
        <begin position="222"/>
        <end position="224"/>
    </location>
    <ligand>
        <name>S-adenosyl-L-methionine</name>
        <dbReference type="ChEBI" id="CHEBI:59789"/>
    </ligand>
</feature>
<feature type="binding site" evidence="1">
    <location>
        <position position="299"/>
    </location>
    <ligand>
        <name>S-adenosyl-L-methionine</name>
        <dbReference type="ChEBI" id="CHEBI:59789"/>
    </ligand>
</feature>
<feature type="disulfide bond" description="(transient)" evidence="1">
    <location>
        <begin position="107"/>
        <end position="342"/>
    </location>
</feature>
<name>RLMN_LEGPH</name>
<reference key="1">
    <citation type="journal article" date="2004" name="Science">
        <title>The genomic sequence of the accidental pathogen Legionella pneumophila.</title>
        <authorList>
            <person name="Chien M."/>
            <person name="Morozova I."/>
            <person name="Shi S."/>
            <person name="Sheng H."/>
            <person name="Chen J."/>
            <person name="Gomez S.M."/>
            <person name="Asamani G."/>
            <person name="Hill K."/>
            <person name="Nuara J."/>
            <person name="Feder M."/>
            <person name="Rineer J."/>
            <person name="Greenberg J.J."/>
            <person name="Steshenko V."/>
            <person name="Park S.H."/>
            <person name="Zhao B."/>
            <person name="Teplitskaya E."/>
            <person name="Edwards J.R."/>
            <person name="Pampou S."/>
            <person name="Georghiou A."/>
            <person name="Chou I.-C."/>
            <person name="Iannuccilli W."/>
            <person name="Ulz M.E."/>
            <person name="Kim D.H."/>
            <person name="Geringer-Sameth A."/>
            <person name="Goldsberry C."/>
            <person name="Morozov P."/>
            <person name="Fischer S.G."/>
            <person name="Segal G."/>
            <person name="Qu X."/>
            <person name="Rzhetsky A."/>
            <person name="Zhang P."/>
            <person name="Cayanis E."/>
            <person name="De Jong P.J."/>
            <person name="Ju J."/>
            <person name="Kalachikov S."/>
            <person name="Shuman H.A."/>
            <person name="Russo J.J."/>
        </authorList>
    </citation>
    <scope>NUCLEOTIDE SEQUENCE [LARGE SCALE GENOMIC DNA]</scope>
    <source>
        <strain>Philadelphia 1 / ATCC 33152 / DSM 7513</strain>
    </source>
</reference>
<proteinExistence type="inferred from homology"/>
<keyword id="KW-0004">4Fe-4S</keyword>
<keyword id="KW-0963">Cytoplasm</keyword>
<keyword id="KW-1015">Disulfide bond</keyword>
<keyword id="KW-0408">Iron</keyword>
<keyword id="KW-0411">Iron-sulfur</keyword>
<keyword id="KW-0479">Metal-binding</keyword>
<keyword id="KW-0489">Methyltransferase</keyword>
<keyword id="KW-1185">Reference proteome</keyword>
<keyword id="KW-0698">rRNA processing</keyword>
<keyword id="KW-0949">S-adenosyl-L-methionine</keyword>
<keyword id="KW-0808">Transferase</keyword>
<keyword id="KW-0819">tRNA processing</keyword>
<dbReference type="EC" id="2.1.1.192" evidence="1"/>
<dbReference type="EMBL" id="AE017354">
    <property type="protein sequence ID" value="AAU27629.1"/>
    <property type="status" value="ALT_INIT"/>
    <property type="molecule type" value="Genomic_DNA"/>
</dbReference>
<dbReference type="RefSeq" id="WP_015444483.1">
    <property type="nucleotide sequence ID" value="NC_002942.5"/>
</dbReference>
<dbReference type="RefSeq" id="YP_095576.1">
    <property type="nucleotide sequence ID" value="NC_002942.5"/>
</dbReference>
<dbReference type="SMR" id="Q5ZV93"/>
<dbReference type="STRING" id="272624.lpg1547"/>
<dbReference type="PaxDb" id="272624-lpg1547"/>
<dbReference type="DNASU" id="3077837"/>
<dbReference type="KEGG" id="lpn:lpg1547"/>
<dbReference type="PATRIC" id="fig|272624.6.peg.1620"/>
<dbReference type="eggNOG" id="COG0820">
    <property type="taxonomic scope" value="Bacteria"/>
</dbReference>
<dbReference type="HOGENOM" id="CLU_029101_0_0_6"/>
<dbReference type="OrthoDB" id="9793973at2"/>
<dbReference type="Proteomes" id="UP000000609">
    <property type="component" value="Chromosome"/>
</dbReference>
<dbReference type="GO" id="GO:0005737">
    <property type="term" value="C:cytoplasm"/>
    <property type="evidence" value="ECO:0007669"/>
    <property type="project" value="UniProtKB-SubCell"/>
</dbReference>
<dbReference type="GO" id="GO:0051539">
    <property type="term" value="F:4 iron, 4 sulfur cluster binding"/>
    <property type="evidence" value="ECO:0007669"/>
    <property type="project" value="UniProtKB-UniRule"/>
</dbReference>
<dbReference type="GO" id="GO:0046872">
    <property type="term" value="F:metal ion binding"/>
    <property type="evidence" value="ECO:0007669"/>
    <property type="project" value="UniProtKB-KW"/>
</dbReference>
<dbReference type="GO" id="GO:0070040">
    <property type="term" value="F:rRNA (adenine(2503)-C2-)-methyltransferase activity"/>
    <property type="evidence" value="ECO:0007669"/>
    <property type="project" value="UniProtKB-UniRule"/>
</dbReference>
<dbReference type="GO" id="GO:0019843">
    <property type="term" value="F:rRNA binding"/>
    <property type="evidence" value="ECO:0007669"/>
    <property type="project" value="UniProtKB-UniRule"/>
</dbReference>
<dbReference type="GO" id="GO:0002935">
    <property type="term" value="F:tRNA (adenine(37)-C2)-methyltransferase activity"/>
    <property type="evidence" value="ECO:0007669"/>
    <property type="project" value="UniProtKB-UniRule"/>
</dbReference>
<dbReference type="GO" id="GO:0000049">
    <property type="term" value="F:tRNA binding"/>
    <property type="evidence" value="ECO:0007669"/>
    <property type="project" value="UniProtKB-UniRule"/>
</dbReference>
<dbReference type="GO" id="GO:0070475">
    <property type="term" value="P:rRNA base methylation"/>
    <property type="evidence" value="ECO:0007669"/>
    <property type="project" value="UniProtKB-UniRule"/>
</dbReference>
<dbReference type="GO" id="GO:0030488">
    <property type="term" value="P:tRNA methylation"/>
    <property type="evidence" value="ECO:0007669"/>
    <property type="project" value="UniProtKB-UniRule"/>
</dbReference>
<dbReference type="CDD" id="cd01335">
    <property type="entry name" value="Radical_SAM"/>
    <property type="match status" value="1"/>
</dbReference>
<dbReference type="FunFam" id="1.10.150.530:FF:000003">
    <property type="entry name" value="Dual-specificity RNA methyltransferase RlmN"/>
    <property type="match status" value="1"/>
</dbReference>
<dbReference type="FunFam" id="3.20.20.70:FF:000008">
    <property type="entry name" value="Dual-specificity RNA methyltransferase RlmN"/>
    <property type="match status" value="1"/>
</dbReference>
<dbReference type="Gene3D" id="1.10.150.530">
    <property type="match status" value="1"/>
</dbReference>
<dbReference type="Gene3D" id="3.20.20.70">
    <property type="entry name" value="Aldolase class I"/>
    <property type="match status" value="1"/>
</dbReference>
<dbReference type="HAMAP" id="MF_01849">
    <property type="entry name" value="RNA_methyltr_RlmN"/>
    <property type="match status" value="1"/>
</dbReference>
<dbReference type="InterPro" id="IPR013785">
    <property type="entry name" value="Aldolase_TIM"/>
</dbReference>
<dbReference type="InterPro" id="IPR040072">
    <property type="entry name" value="Methyltransferase_A"/>
</dbReference>
<dbReference type="InterPro" id="IPR048641">
    <property type="entry name" value="RlmN_N"/>
</dbReference>
<dbReference type="InterPro" id="IPR027492">
    <property type="entry name" value="RNA_MTrfase_RlmN"/>
</dbReference>
<dbReference type="InterPro" id="IPR004383">
    <property type="entry name" value="rRNA_lsu_MTrfase_RlmN/Cfr"/>
</dbReference>
<dbReference type="InterPro" id="IPR007197">
    <property type="entry name" value="rSAM"/>
</dbReference>
<dbReference type="NCBIfam" id="TIGR00048">
    <property type="entry name" value="rRNA_mod_RlmN"/>
    <property type="match status" value="1"/>
</dbReference>
<dbReference type="PANTHER" id="PTHR30544">
    <property type="entry name" value="23S RRNA METHYLTRANSFERASE"/>
    <property type="match status" value="1"/>
</dbReference>
<dbReference type="PANTHER" id="PTHR30544:SF5">
    <property type="entry name" value="RADICAL SAM CORE DOMAIN-CONTAINING PROTEIN"/>
    <property type="match status" value="1"/>
</dbReference>
<dbReference type="Pfam" id="PF04055">
    <property type="entry name" value="Radical_SAM"/>
    <property type="match status" value="1"/>
</dbReference>
<dbReference type="Pfam" id="PF21016">
    <property type="entry name" value="RlmN_N"/>
    <property type="match status" value="1"/>
</dbReference>
<dbReference type="PIRSF" id="PIRSF006004">
    <property type="entry name" value="CHP00048"/>
    <property type="match status" value="1"/>
</dbReference>
<dbReference type="SFLD" id="SFLDF00275">
    <property type="entry name" value="adenosine_C2_methyltransferase"/>
    <property type="match status" value="1"/>
</dbReference>
<dbReference type="SFLD" id="SFLDG01062">
    <property type="entry name" value="methyltransferase_(Class_A)"/>
    <property type="match status" value="1"/>
</dbReference>
<dbReference type="SUPFAM" id="SSF102114">
    <property type="entry name" value="Radical SAM enzymes"/>
    <property type="match status" value="1"/>
</dbReference>
<dbReference type="PROSITE" id="PS51918">
    <property type="entry name" value="RADICAL_SAM"/>
    <property type="match status" value="1"/>
</dbReference>
<organism>
    <name type="scientific">Legionella pneumophila subsp. pneumophila (strain Philadelphia 1 / ATCC 33152 / DSM 7513)</name>
    <dbReference type="NCBI Taxonomy" id="272624"/>
    <lineage>
        <taxon>Bacteria</taxon>
        <taxon>Pseudomonadati</taxon>
        <taxon>Pseudomonadota</taxon>
        <taxon>Gammaproteobacteria</taxon>
        <taxon>Legionellales</taxon>
        <taxon>Legionellaceae</taxon>
        <taxon>Legionella</taxon>
    </lineage>
</organism>
<comment type="function">
    <text evidence="1">Specifically methylates position 2 of adenine 2503 in 23S rRNA and position 2 of adenine 37 in tRNAs. m2A2503 modification seems to play a crucial role in the proofreading step occurring at the peptidyl transferase center and thus would serve to optimize ribosomal fidelity.</text>
</comment>
<comment type="catalytic activity">
    <reaction evidence="1">
        <text>adenosine(2503) in 23S rRNA + 2 reduced [2Fe-2S]-[ferredoxin] + 2 S-adenosyl-L-methionine = 2-methyladenosine(2503) in 23S rRNA + 5'-deoxyadenosine + L-methionine + 2 oxidized [2Fe-2S]-[ferredoxin] + S-adenosyl-L-homocysteine</text>
        <dbReference type="Rhea" id="RHEA:42916"/>
        <dbReference type="Rhea" id="RHEA-COMP:10000"/>
        <dbReference type="Rhea" id="RHEA-COMP:10001"/>
        <dbReference type="Rhea" id="RHEA-COMP:10152"/>
        <dbReference type="Rhea" id="RHEA-COMP:10282"/>
        <dbReference type="ChEBI" id="CHEBI:17319"/>
        <dbReference type="ChEBI" id="CHEBI:33737"/>
        <dbReference type="ChEBI" id="CHEBI:33738"/>
        <dbReference type="ChEBI" id="CHEBI:57844"/>
        <dbReference type="ChEBI" id="CHEBI:57856"/>
        <dbReference type="ChEBI" id="CHEBI:59789"/>
        <dbReference type="ChEBI" id="CHEBI:74411"/>
        <dbReference type="ChEBI" id="CHEBI:74497"/>
        <dbReference type="EC" id="2.1.1.192"/>
    </reaction>
</comment>
<comment type="catalytic activity">
    <reaction evidence="1">
        <text>adenosine(37) in tRNA + 2 reduced [2Fe-2S]-[ferredoxin] + 2 S-adenosyl-L-methionine = 2-methyladenosine(37) in tRNA + 5'-deoxyadenosine + L-methionine + 2 oxidized [2Fe-2S]-[ferredoxin] + S-adenosyl-L-homocysteine</text>
        <dbReference type="Rhea" id="RHEA:43332"/>
        <dbReference type="Rhea" id="RHEA-COMP:10000"/>
        <dbReference type="Rhea" id="RHEA-COMP:10001"/>
        <dbReference type="Rhea" id="RHEA-COMP:10162"/>
        <dbReference type="Rhea" id="RHEA-COMP:10485"/>
        <dbReference type="ChEBI" id="CHEBI:17319"/>
        <dbReference type="ChEBI" id="CHEBI:33737"/>
        <dbReference type="ChEBI" id="CHEBI:33738"/>
        <dbReference type="ChEBI" id="CHEBI:57844"/>
        <dbReference type="ChEBI" id="CHEBI:57856"/>
        <dbReference type="ChEBI" id="CHEBI:59789"/>
        <dbReference type="ChEBI" id="CHEBI:74411"/>
        <dbReference type="ChEBI" id="CHEBI:74497"/>
        <dbReference type="EC" id="2.1.1.192"/>
    </reaction>
</comment>
<comment type="cofactor">
    <cofactor evidence="1">
        <name>[4Fe-4S] cluster</name>
        <dbReference type="ChEBI" id="CHEBI:49883"/>
    </cofactor>
    <text evidence="1">Binds 1 [4Fe-4S] cluster. The cluster is coordinated with 3 cysteines and an exchangeable S-adenosyl-L-methionine.</text>
</comment>
<comment type="subcellular location">
    <subcellularLocation>
        <location evidence="1">Cytoplasm</location>
    </subcellularLocation>
</comment>
<comment type="miscellaneous">
    <text evidence="1">Reaction proceeds by a ping-pong mechanism involving intermediate methylation of a conserved cysteine residue.</text>
</comment>
<comment type="similarity">
    <text evidence="1">Belongs to the radical SAM superfamily. RlmN family.</text>
</comment>
<comment type="sequence caution" evidence="3">
    <conflict type="erroneous initiation">
        <sequence resource="EMBL-CDS" id="AAU27629"/>
    </conflict>
</comment>
<protein>
    <recommendedName>
        <fullName evidence="1">Dual-specificity RNA methyltransferase RlmN</fullName>
        <ecNumber evidence="1">2.1.1.192</ecNumber>
    </recommendedName>
    <alternativeName>
        <fullName evidence="1">23S rRNA (adenine(2503)-C(2))-methyltransferase</fullName>
    </alternativeName>
    <alternativeName>
        <fullName evidence="1">23S rRNA m2A2503 methyltransferase</fullName>
    </alternativeName>
    <alternativeName>
        <fullName evidence="1">Ribosomal RNA large subunit methyltransferase N</fullName>
    </alternativeName>
    <alternativeName>
        <fullName evidence="1">tRNA (adenine(37)-C(2))-methyltransferase</fullName>
    </alternativeName>
    <alternativeName>
        <fullName evidence="1">tRNA m2A37 methyltransferase</fullName>
    </alternativeName>
</protein>
<gene>
    <name evidence="1" type="primary">rlmN</name>
    <name type="ordered locus">lpg1547</name>
</gene>